<comment type="function">
    <text evidence="1">Plays an important role in the physiology of adrenergic neurons.</text>
</comment>
<comment type="catalytic activity">
    <reaction>
        <text>(6R)-L-erythro-5,6,7,8-tetrahydrobiopterin + L-tyrosine + O2 = (4aS,6R)-4a-hydroxy-L-erythro-5,6,7,8-tetrahydrobiopterin + L-dopa</text>
        <dbReference type="Rhea" id="RHEA:18201"/>
        <dbReference type="ChEBI" id="CHEBI:15379"/>
        <dbReference type="ChEBI" id="CHEBI:15642"/>
        <dbReference type="ChEBI" id="CHEBI:57504"/>
        <dbReference type="ChEBI" id="CHEBI:58315"/>
        <dbReference type="ChEBI" id="CHEBI:59560"/>
        <dbReference type="EC" id="1.14.16.2"/>
    </reaction>
</comment>
<comment type="cofactor">
    <cofactor>
        <name>Fe(2+)</name>
        <dbReference type="ChEBI" id="CHEBI:29033"/>
    </cofactor>
</comment>
<comment type="activity regulation">
    <text evidence="2">Phosphorylation leads to an increase in the catalytic activity.</text>
</comment>
<comment type="pathway">
    <text>Catecholamine biosynthesis; dopamine biosynthesis; dopamine from L-tyrosine: step 1/2.</text>
</comment>
<comment type="subcellular location">
    <subcellularLocation>
        <location evidence="3">Cytoplasm</location>
        <location evidence="3">Perinuclear region</location>
    </subcellularLocation>
    <subcellularLocation>
        <location evidence="3">Cell projection</location>
        <location evidence="3">Axon</location>
    </subcellularLocation>
    <text evidence="3">Expressed in dopaminergic axons and axon terminals.</text>
</comment>
<comment type="similarity">
    <text evidence="5">Belongs to the biopterin-dependent aromatic amino acid hydroxylase family.</text>
</comment>
<name>TY3H_ANGAN</name>
<gene>
    <name type="primary">th</name>
</gene>
<evidence type="ECO:0000250" key="1"/>
<evidence type="ECO:0000250" key="2">
    <source>
        <dbReference type="UniProtKB" id="P07101"/>
    </source>
</evidence>
<evidence type="ECO:0000250" key="3">
    <source>
        <dbReference type="UniProtKB" id="P24529"/>
    </source>
</evidence>
<evidence type="ECO:0000256" key="4">
    <source>
        <dbReference type="SAM" id="MobiDB-lite"/>
    </source>
</evidence>
<evidence type="ECO:0000305" key="5"/>
<reference key="1">
    <citation type="journal article" date="1998" name="J. Neurochem.">
        <title>Tyrosine hydroxylase in the European eel (Anguilla anguilla): cDNA cloning, brain distribution, and phylogenetic analysis.</title>
        <authorList>
            <person name="Boularand S."/>
            <person name="Biguet N.F."/>
            <person name="Vidal B."/>
            <person name="Veron M."/>
            <person name="Mallet J."/>
            <person name="Vincent J.D."/>
            <person name="Dufour S."/>
            <person name="Vernier P."/>
        </authorList>
    </citation>
    <scope>NUCLEOTIDE SEQUENCE [MRNA]</scope>
</reference>
<protein>
    <recommendedName>
        <fullName>Tyrosine 3-monooxygenase</fullName>
        <ecNumber>1.14.16.2</ecNumber>
    </recommendedName>
    <alternativeName>
        <fullName>Tyrosine 3-hydroxylase</fullName>
        <shortName>TH</shortName>
    </alternativeName>
</protein>
<keyword id="KW-0127">Catecholamine biosynthesis</keyword>
<keyword id="KW-0966">Cell projection</keyword>
<keyword id="KW-0963">Cytoplasm</keyword>
<keyword id="KW-0408">Iron</keyword>
<keyword id="KW-0479">Metal-binding</keyword>
<keyword id="KW-0503">Monooxygenase</keyword>
<keyword id="KW-0530">Neurotransmitter biosynthesis</keyword>
<keyword id="KW-0560">Oxidoreductase</keyword>
<keyword id="KW-0597">Phosphoprotein</keyword>
<organism>
    <name type="scientific">Anguilla anguilla</name>
    <name type="common">European freshwater eel</name>
    <name type="synonym">Muraena anguilla</name>
    <dbReference type="NCBI Taxonomy" id="7936"/>
    <lineage>
        <taxon>Eukaryota</taxon>
        <taxon>Metazoa</taxon>
        <taxon>Chordata</taxon>
        <taxon>Craniata</taxon>
        <taxon>Vertebrata</taxon>
        <taxon>Euteleostomi</taxon>
        <taxon>Actinopterygii</taxon>
        <taxon>Neopterygii</taxon>
        <taxon>Teleostei</taxon>
        <taxon>Anguilliformes</taxon>
        <taxon>Anguillidae</taxon>
        <taxon>Anguilla</taxon>
    </lineage>
</organism>
<feature type="chain" id="PRO_0000205559" description="Tyrosine 3-monooxygenase">
    <location>
        <begin position="1"/>
        <end position="488"/>
    </location>
</feature>
<feature type="region of interest" description="Disordered" evidence="4">
    <location>
        <begin position="1"/>
        <end position="29"/>
    </location>
</feature>
<feature type="compositionally biased region" description="Low complexity" evidence="4">
    <location>
        <begin position="1"/>
        <end position="13"/>
    </location>
</feature>
<feature type="binding site" evidence="1">
    <location>
        <position position="321"/>
    </location>
    <ligand>
        <name>Fe cation</name>
        <dbReference type="ChEBI" id="CHEBI:24875"/>
    </ligand>
</feature>
<feature type="binding site" evidence="1">
    <location>
        <position position="326"/>
    </location>
    <ligand>
        <name>Fe cation</name>
        <dbReference type="ChEBI" id="CHEBI:24875"/>
    </ligand>
</feature>
<feature type="binding site" evidence="1">
    <location>
        <position position="366"/>
    </location>
    <ligand>
        <name>Fe cation</name>
        <dbReference type="ChEBI" id="CHEBI:24875"/>
    </ligand>
</feature>
<feature type="modified residue" description="Phosphoserine; by PKA" evidence="1">
    <location>
        <position position="38"/>
    </location>
</feature>
<sequence>MPISNSSGSSTKSITRAGSELDRADSITSPRFVGRRQSLIEDARKEREAAAAAESSEASEQIVFDEEDGKALLNLFFTLRSSKIPALSRALKVFETFEAKIHHLETRTRRKPKDSLEDLEYFVRCEVHLADVSTLISSIRRIAEDVRTTKEVKFHWFPKKISELDSCHHLVTKFDPDLDQDHPGFTDPVYRQRRRMIGEIAFRYKHGEPIPRVEYTEEEIGTWREVYSTLRDLYTTHACSEHLEAFRLLERHCGYSPNSIPQLEDVSHFLKERTGFQLRPVAGLLSARDFLASLAFRVFQCTQYIRHASSPMHSPEPDCVHELLGHVPMLADRTFAQFSQNIGLASLGASEEDIEKLSTLYWFTVEFGLCKQGDGVKAYGAGLLSSYGELVHSLSDEPERREFDPEAAAAEPYQDQNYQSVYFVSESFTDAKEKLRVYAAGINRPFSVRFDPYTYSIEVLDNPLKIRGGLESVKDELKVLTDALNVLA</sequence>
<accession>O42091</accession>
<proteinExistence type="evidence at transcript level"/>
<dbReference type="EC" id="1.14.16.2"/>
<dbReference type="EMBL" id="AJ000731">
    <property type="protein sequence ID" value="CAA04264.1"/>
    <property type="molecule type" value="mRNA"/>
</dbReference>
<dbReference type="RefSeq" id="XP_035274693.1">
    <property type="nucleotide sequence ID" value="XM_035418802.1"/>
</dbReference>
<dbReference type="SMR" id="O42091"/>
<dbReference type="GeneID" id="118227840"/>
<dbReference type="OMA" id="SVEHGYP"/>
<dbReference type="OrthoDB" id="983542at2759"/>
<dbReference type="UniPathway" id="UPA00747">
    <property type="reaction ID" value="UER00733"/>
</dbReference>
<dbReference type="GO" id="GO:0030424">
    <property type="term" value="C:axon"/>
    <property type="evidence" value="ECO:0007669"/>
    <property type="project" value="UniProtKB-SubCell"/>
</dbReference>
<dbReference type="GO" id="GO:0043204">
    <property type="term" value="C:perikaryon"/>
    <property type="evidence" value="ECO:0007669"/>
    <property type="project" value="TreeGrafter"/>
</dbReference>
<dbReference type="GO" id="GO:0048471">
    <property type="term" value="C:perinuclear region of cytoplasm"/>
    <property type="evidence" value="ECO:0007669"/>
    <property type="project" value="UniProtKB-SubCell"/>
</dbReference>
<dbReference type="GO" id="GO:0005506">
    <property type="term" value="F:iron ion binding"/>
    <property type="evidence" value="ECO:0007669"/>
    <property type="project" value="InterPro"/>
</dbReference>
<dbReference type="GO" id="GO:0004511">
    <property type="term" value="F:tyrosine 3-monooxygenase activity"/>
    <property type="evidence" value="ECO:0007669"/>
    <property type="project" value="UniProtKB-EC"/>
</dbReference>
<dbReference type="GO" id="GO:0006585">
    <property type="term" value="P:dopamine biosynthetic process from tyrosine"/>
    <property type="evidence" value="ECO:0007669"/>
    <property type="project" value="TreeGrafter"/>
</dbReference>
<dbReference type="CDD" id="cd03345">
    <property type="entry name" value="eu_TyrOH"/>
    <property type="match status" value="1"/>
</dbReference>
<dbReference type="FunFam" id="1.10.800.10:FF:000002">
    <property type="entry name" value="Tyrosine 3-monooxygenase"/>
    <property type="match status" value="1"/>
</dbReference>
<dbReference type="FunFam" id="3.30.70.260:FF:000024">
    <property type="entry name" value="Tyrosine 3-monooxygenase"/>
    <property type="match status" value="1"/>
</dbReference>
<dbReference type="Gene3D" id="3.30.70.260">
    <property type="match status" value="1"/>
</dbReference>
<dbReference type="Gene3D" id="1.10.800.10">
    <property type="entry name" value="Aromatic amino acid hydroxylase"/>
    <property type="match status" value="1"/>
</dbReference>
<dbReference type="InterPro" id="IPR045865">
    <property type="entry name" value="ACT-like_dom_sf"/>
</dbReference>
<dbReference type="InterPro" id="IPR001273">
    <property type="entry name" value="ArAA_hydroxylase"/>
</dbReference>
<dbReference type="InterPro" id="IPR018301">
    <property type="entry name" value="ArAA_hydroxylase_Fe/CU_BS"/>
</dbReference>
<dbReference type="InterPro" id="IPR036951">
    <property type="entry name" value="ArAA_hydroxylase_sf"/>
</dbReference>
<dbReference type="InterPro" id="IPR036329">
    <property type="entry name" value="Aro-AA_hydroxylase_C_sf"/>
</dbReference>
<dbReference type="InterPro" id="IPR019774">
    <property type="entry name" value="Aromatic-AA_hydroxylase_C"/>
</dbReference>
<dbReference type="InterPro" id="IPR041903">
    <property type="entry name" value="Eu_TyrOH_cat"/>
</dbReference>
<dbReference type="InterPro" id="IPR049321">
    <property type="entry name" value="TH_ACT"/>
</dbReference>
<dbReference type="InterPro" id="IPR005962">
    <property type="entry name" value="Tyr_3_mOase"/>
</dbReference>
<dbReference type="InterPro" id="IPR019773">
    <property type="entry name" value="Tyrosine_3-monooxygenase-like"/>
</dbReference>
<dbReference type="InterPro" id="IPR021164">
    <property type="entry name" value="Tyrosine_hydroxylase_CS"/>
</dbReference>
<dbReference type="NCBIfam" id="TIGR01269">
    <property type="entry name" value="Tyr_3_monoox"/>
    <property type="match status" value="1"/>
</dbReference>
<dbReference type="PANTHER" id="PTHR11473">
    <property type="entry name" value="AROMATIC AMINO ACID HYDROXYLASE"/>
    <property type="match status" value="1"/>
</dbReference>
<dbReference type="PANTHER" id="PTHR11473:SF39">
    <property type="entry name" value="TYROSINE 3-MONOOXYGENASE"/>
    <property type="match status" value="1"/>
</dbReference>
<dbReference type="Pfam" id="PF00351">
    <property type="entry name" value="Biopterin_H"/>
    <property type="match status" value="1"/>
</dbReference>
<dbReference type="Pfam" id="PF21417">
    <property type="entry name" value="TH_ACT"/>
    <property type="match status" value="1"/>
</dbReference>
<dbReference type="Pfam" id="PF12549">
    <property type="entry name" value="TOH_N"/>
    <property type="match status" value="1"/>
</dbReference>
<dbReference type="PIRSF" id="PIRSF000336">
    <property type="entry name" value="TH"/>
    <property type="match status" value="1"/>
</dbReference>
<dbReference type="PRINTS" id="PR00372">
    <property type="entry name" value="FYWHYDRXLASE"/>
</dbReference>
<dbReference type="SUPFAM" id="SSF55021">
    <property type="entry name" value="ACT-like"/>
    <property type="match status" value="1"/>
</dbReference>
<dbReference type="SUPFAM" id="SSF56534">
    <property type="entry name" value="Aromatic aminoacid monoxygenases, catalytic and oligomerization domains"/>
    <property type="match status" value="1"/>
</dbReference>
<dbReference type="PROSITE" id="PS00367">
    <property type="entry name" value="BH4_AAA_HYDROXYL_1"/>
    <property type="match status" value="1"/>
</dbReference>
<dbReference type="PROSITE" id="PS51410">
    <property type="entry name" value="BH4_AAA_HYDROXYL_2"/>
    <property type="match status" value="1"/>
</dbReference>